<accession>Q5TM68</accession>
<dbReference type="EMBL" id="AB128049">
    <property type="protein sequence ID" value="BAD69758.1"/>
    <property type="molecule type" value="Genomic_DNA"/>
</dbReference>
<dbReference type="RefSeq" id="NP_001108419.1">
    <property type="nucleotide sequence ID" value="NM_001114947.1"/>
</dbReference>
<dbReference type="SMR" id="Q5TM68"/>
<dbReference type="FunCoup" id="Q5TM68">
    <property type="interactions" value="2179"/>
</dbReference>
<dbReference type="STRING" id="9544.ENSMMUP00000031201"/>
<dbReference type="PaxDb" id="9544-ENSMMUP00000031201"/>
<dbReference type="GeneID" id="712318"/>
<dbReference type="KEGG" id="mcc:712318"/>
<dbReference type="CTD" id="9656"/>
<dbReference type="eggNOG" id="KOG2043">
    <property type="taxonomic scope" value="Eukaryota"/>
</dbReference>
<dbReference type="HOGENOM" id="CLU_294520_0_0_1"/>
<dbReference type="InParanoid" id="Q5TM68"/>
<dbReference type="OrthoDB" id="342264at2759"/>
<dbReference type="Proteomes" id="UP000006718">
    <property type="component" value="Unassembled WGS sequence"/>
</dbReference>
<dbReference type="GO" id="GO:0005694">
    <property type="term" value="C:chromosome"/>
    <property type="evidence" value="ECO:0000250"/>
    <property type="project" value="UniProtKB"/>
</dbReference>
<dbReference type="GO" id="GO:0005634">
    <property type="term" value="C:nucleus"/>
    <property type="evidence" value="ECO:0000318"/>
    <property type="project" value="GO_Central"/>
</dbReference>
<dbReference type="GO" id="GO:0035861">
    <property type="term" value="C:site of double-strand break"/>
    <property type="evidence" value="ECO:0000250"/>
    <property type="project" value="UniProtKB"/>
</dbReference>
<dbReference type="GO" id="GO:0140463">
    <property type="term" value="F:chromatin-protein adaptor activity"/>
    <property type="evidence" value="ECO:0000250"/>
    <property type="project" value="UniProtKB"/>
</dbReference>
<dbReference type="GO" id="GO:0140566">
    <property type="term" value="F:histone reader activity"/>
    <property type="evidence" value="ECO:0000250"/>
    <property type="project" value="UniProtKB"/>
</dbReference>
<dbReference type="GO" id="GO:0006281">
    <property type="term" value="P:DNA repair"/>
    <property type="evidence" value="ECO:0007669"/>
    <property type="project" value="UniProtKB-KW"/>
</dbReference>
<dbReference type="GO" id="GO:0000076">
    <property type="term" value="P:DNA replication checkpoint signaling"/>
    <property type="evidence" value="ECO:0000250"/>
    <property type="project" value="UniProtKB"/>
</dbReference>
<dbReference type="GO" id="GO:1990166">
    <property type="term" value="P:protein localization to site of double-strand break"/>
    <property type="evidence" value="ECO:0000250"/>
    <property type="project" value="UniProtKB"/>
</dbReference>
<dbReference type="CDD" id="cd17744">
    <property type="entry name" value="BRCT_MDC1_rpt1"/>
    <property type="match status" value="1"/>
</dbReference>
<dbReference type="CDD" id="cd18441">
    <property type="entry name" value="BRCT_MDC1_rpt2"/>
    <property type="match status" value="1"/>
</dbReference>
<dbReference type="CDD" id="cd22665">
    <property type="entry name" value="FHA_MDC1"/>
    <property type="match status" value="1"/>
</dbReference>
<dbReference type="FunFam" id="2.60.200.20:FF:000029">
    <property type="entry name" value="Mediator of DNA damage checkpoint protein 1"/>
    <property type="match status" value="1"/>
</dbReference>
<dbReference type="FunFam" id="3.40.50.10190:FF:000037">
    <property type="entry name" value="Mediator of DNA damage checkpoint protein 1"/>
    <property type="match status" value="1"/>
</dbReference>
<dbReference type="FunFam" id="3.40.50.10190:FF:000040">
    <property type="entry name" value="Mediator of DNA damage checkpoint protein 1"/>
    <property type="match status" value="1"/>
</dbReference>
<dbReference type="Gene3D" id="2.60.200.20">
    <property type="match status" value="1"/>
</dbReference>
<dbReference type="Gene3D" id="3.40.50.10190">
    <property type="entry name" value="BRCT domain"/>
    <property type="match status" value="2"/>
</dbReference>
<dbReference type="InterPro" id="IPR001357">
    <property type="entry name" value="BRCT_dom"/>
</dbReference>
<dbReference type="InterPro" id="IPR036420">
    <property type="entry name" value="BRCT_dom_sf"/>
</dbReference>
<dbReference type="InterPro" id="IPR051579">
    <property type="entry name" value="DDR_Transcriptional_Reg"/>
</dbReference>
<dbReference type="InterPro" id="IPR000253">
    <property type="entry name" value="FHA_dom"/>
</dbReference>
<dbReference type="InterPro" id="IPR008984">
    <property type="entry name" value="SMAD_FHA_dom_sf"/>
</dbReference>
<dbReference type="PANTHER" id="PTHR23196:SF34">
    <property type="entry name" value="MEDIATOR OF DNA DAMAGE CHECKPOINT PROTEIN 1"/>
    <property type="match status" value="1"/>
</dbReference>
<dbReference type="PANTHER" id="PTHR23196">
    <property type="entry name" value="PAX TRANSCRIPTION ACTIVATION DOMAIN INTERACTING PROTEIN"/>
    <property type="match status" value="1"/>
</dbReference>
<dbReference type="Pfam" id="PF16589">
    <property type="entry name" value="BRCT_2"/>
    <property type="match status" value="1"/>
</dbReference>
<dbReference type="Pfam" id="PF00498">
    <property type="entry name" value="FHA"/>
    <property type="match status" value="1"/>
</dbReference>
<dbReference type="Pfam" id="PF16770">
    <property type="entry name" value="RTT107_BRCT_5"/>
    <property type="match status" value="1"/>
</dbReference>
<dbReference type="SMART" id="SM00292">
    <property type="entry name" value="BRCT"/>
    <property type="match status" value="2"/>
</dbReference>
<dbReference type="SMART" id="SM00240">
    <property type="entry name" value="FHA"/>
    <property type="match status" value="1"/>
</dbReference>
<dbReference type="SUPFAM" id="SSF52113">
    <property type="entry name" value="BRCT domain"/>
    <property type="match status" value="2"/>
</dbReference>
<dbReference type="SUPFAM" id="SSF49879">
    <property type="entry name" value="SMAD/FHA domain"/>
    <property type="match status" value="1"/>
</dbReference>
<dbReference type="PROSITE" id="PS50172">
    <property type="entry name" value="BRCT"/>
    <property type="match status" value="1"/>
</dbReference>
<dbReference type="PROSITE" id="PS50006">
    <property type="entry name" value="FHA_DOMAIN"/>
    <property type="match status" value="1"/>
</dbReference>
<proteinExistence type="inferred from homology"/>
<evidence type="ECO:0000250" key="1"/>
<evidence type="ECO:0000250" key="2">
    <source>
        <dbReference type="UniProtKB" id="Q14676"/>
    </source>
</evidence>
<evidence type="ECO:0000250" key="3">
    <source>
        <dbReference type="UniProtKB" id="Q5PSV9"/>
    </source>
</evidence>
<evidence type="ECO:0000250" key="4">
    <source>
        <dbReference type="UniProtKB" id="Q5U2M8"/>
    </source>
</evidence>
<evidence type="ECO:0000255" key="5">
    <source>
        <dbReference type="PROSITE-ProRule" id="PRU00033"/>
    </source>
</evidence>
<evidence type="ECO:0000255" key="6">
    <source>
        <dbReference type="PROSITE-ProRule" id="PRU00086"/>
    </source>
</evidence>
<evidence type="ECO:0000256" key="7">
    <source>
        <dbReference type="SAM" id="MobiDB-lite"/>
    </source>
</evidence>
<protein>
    <recommendedName>
        <fullName>Mediator of DNA damage checkpoint protein 1</fullName>
    </recommendedName>
</protein>
<organism>
    <name type="scientific">Macaca mulatta</name>
    <name type="common">Rhesus macaque</name>
    <dbReference type="NCBI Taxonomy" id="9544"/>
    <lineage>
        <taxon>Eukaryota</taxon>
        <taxon>Metazoa</taxon>
        <taxon>Chordata</taxon>
        <taxon>Craniata</taxon>
        <taxon>Vertebrata</taxon>
        <taxon>Euteleostomi</taxon>
        <taxon>Mammalia</taxon>
        <taxon>Eutheria</taxon>
        <taxon>Euarchontoglires</taxon>
        <taxon>Primates</taxon>
        <taxon>Haplorrhini</taxon>
        <taxon>Catarrhini</taxon>
        <taxon>Cercopithecidae</taxon>
        <taxon>Cercopithecinae</taxon>
        <taxon>Macaca</taxon>
    </lineage>
</organism>
<sequence>MEDTQAIDWDVEEEEETEQSSESLRCNVEPVGRLHIFSGAHGPEKDFPLHLGKNVVGRMPDCSVALPFPSISKQHAEIEILAWDKAPILRDCGSLNGTQILRPPKVLSPGVSHRLRDQELILFADLLCQYHRLDVSLPFVSRGPLTVEETPRVQGGTQPQRLLLAEDSEEEVDFLSERHVVKKSRTTSSPVAMIVPESDEEGHSPVLGGPGPPFAFNLNSDTDAEEGQQSATEEASSAARRGATIEAEQSEAEVVTEIQLEKDQPSVKERDNDTKVKRGAGNGVVPAGMILERSQPPGEDSDTDVDDDSRPPGRPAEVHLERAQPFGFIDSDTDAEEEGIPATPVVVPMKKRKIFHGVGTRGPGAPGLSHLQESQAGSDTDVEEGKAPQAVPLEKSQASMVINSDTDDEEEVSAALTLARLKESQPAVWNRDAEEDMAHHAVLLQRSQTTTGRDSDTDVEEEELPVENKQTVPKAHTKIRALVRAHSEKDQPPFGDSDDSVEADKSSPGIHLERSQASITVDINTQVEEEVPPGSAIVHMKKHQVSMEGTNQTDVKADGGPAKLLVVSLEEASPPHGDCEIDAEEGTSLAASAVADVRKSQLPAEGDAGAEWTAACLKQERAYEVGAQGGSPVAQVEQDLPTSRENLTDLVVDTDTPGESTQPQREGAQVPTGREREQHVGRTKDSEDNCDDSEDPDLQATQCFLENQGLEAVQSMEDEPTQAFMLTPPQELGSSHCSFQTTGTLDEPWEVLATQPFCLRESEDSETQPFDTHLEAYGPCLSPPRAIPGDQHPESPVHTEPMGIQGRGRQTVDKGMGIPKETAERVGPERGPLERETEKLLPERQTDVTGEEELTRGIQDREQKQLLARDTQRQESDKNGESASPERDRESLKVEIETSKEIQGKQVQKQTLPSKAFEREVERPVADRECEPAELEEKVPKVILERDAQRGEPKGGSQDQKGQASSPTSEPGVGAGDLPGPTSAPVPSGSQSGGRGSPVSPRRHQKGLLNCKMPPTEKASRIGAAEKASRGDQESPDACLPPTVPEASAPPQKPLNSQSQKHLAPQPLLSPLSPSIEPTIRKTGQDRSQEAPETPLSSELEPFHPKPKIITRKSSRMTPFPATSAAPEPHPSTSTAQPVTPKPTSQATRSRTNRSSVKTPEPVVPTVPELQPSTSTDQPVASEPTSQATRGRKNRSSVKTPEAVVPTALELHPSNSTDQPVTPKPTSEAIRSRTNRSSVKTPEAVVPTALELHPSNSTDQPVTPKPTSEAIRSRTNRSSVKTPEPVVPTVPELQPSTSTDQPVTSEPTSQATRGRTNRSSVKTPEPVVPTVPELQPSTSTDQPVASEPTSQATRGRKNRSSVKTPEAVVPTALELHPSNSTDQPVTPKPTSRTTRSRTNMSSVKTPESTVPIAPELPPSTSTEQPVITEPTYQPTRGRKNRSSVKTPETVVATAPKLQSSTSTDQPITPEPTSQATRGRTNRSSVKSPETVLRTAPELQPSTSTHQPVTAKHTSQATRGRTNRSSVKTPEPVVSTAPELQPSTSTHQPITPEPTSQATRGRTDRTSVKTPKIVVPTVPELQASTSTDQPVTSEPTSRTTRGRKNRSSVKTPETVVPTAPEPHPTTSTDQPITPKPTSRATRGRTNRSSVKTPELIVPIAPEFHPSTSRSQLVTPEPTSRATRGRKNRSSVKTPEPAVPTAPELHPTTSTDQPVTPKPTSRATRGRTNRSSVKTPEPVEPAASDLEPFTPTDQPVTPEAIPQGSQSKTLRSSTVSAMLIPTTPEFQSPVTTDQPISPEPIPQASCIKRQRATGNPGSLTAPIDHKPCSAPLEPKSRPSRNQRWGAVRADESLTAIPEPASPQLLDIPTHASQIQKVEPAGRSRFTPELQPKASQSRKRSLAIMDSPPHQKQPQRGEVSQKTVIIKEEEEDTAEKPGKEEDVMTPKPGKRKRDQAEEEPNRIPNRSLRRTKLNQESTAPKVLFTGVVDAQGERAVLALGGSLAGSAAEASHLVTDRIRRTVKFLCALGRGIPILSLDWLHQSRKAGCFLPPDEYVVTDPEQEKNFGFSLQDALSRARERRLLEGYEIYVTPGVQPPPPQMGEIISCCGGTYLPSMPRSYKPQRVVITCPQDFPRCSVPLRVGLPLLSPEFLLTGVLKQEAKPEAFVLSPLEMSST</sequence>
<feature type="chain" id="PRO_0000096317" description="Mediator of DNA damage checkpoint protein 1">
    <location>
        <begin position="1"/>
        <end position="2173"/>
    </location>
</feature>
<feature type="domain" description="FHA" evidence="6">
    <location>
        <begin position="54"/>
        <end position="105"/>
    </location>
</feature>
<feature type="domain" description="BRCT 1" evidence="5">
    <location>
        <begin position="1976"/>
        <end position="2054"/>
    </location>
</feature>
<feature type="domain" description="BRCT 2" evidence="5">
    <location>
        <begin position="2075"/>
        <end position="2166"/>
    </location>
</feature>
<feature type="region of interest" description="Interaction with CHEK2" evidence="1">
    <location>
        <begin position="1"/>
        <end position="150"/>
    </location>
</feature>
<feature type="region of interest" description="Disordered" evidence="7">
    <location>
        <begin position="1"/>
        <end position="22"/>
    </location>
</feature>
<feature type="region of interest" description="Interaction with the MRN complex" evidence="1">
    <location>
        <begin position="2"/>
        <end position="222"/>
    </location>
</feature>
<feature type="region of interest" description="Required for nuclear localization (NLS1)" evidence="1">
    <location>
        <begin position="145"/>
        <end position="570"/>
    </location>
</feature>
<feature type="region of interest" description="Disordered" evidence="7">
    <location>
        <begin position="198"/>
        <end position="320"/>
    </location>
</feature>
<feature type="region of interest" description="Disordered" evidence="7">
    <location>
        <begin position="359"/>
        <end position="383"/>
    </location>
</feature>
<feature type="region of interest" description="Disordered" evidence="7">
    <location>
        <begin position="444"/>
        <end position="515"/>
    </location>
</feature>
<feature type="region of interest" description="Disordered" evidence="7">
    <location>
        <begin position="652"/>
        <end position="697"/>
    </location>
</feature>
<feature type="region of interest" description="Disordered" evidence="7">
    <location>
        <begin position="773"/>
        <end position="1770"/>
    </location>
</feature>
<feature type="region of interest" description="Interaction with the PRKDC complex" evidence="1">
    <location>
        <begin position="1150"/>
        <end position="1694"/>
    </location>
</feature>
<feature type="region of interest" description="Required for nuclear localization (NLS2)" evidence="1">
    <location>
        <begin position="1782"/>
        <end position="2173"/>
    </location>
</feature>
<feature type="region of interest" description="Disordered" evidence="7">
    <location>
        <begin position="1809"/>
        <end position="1971"/>
    </location>
</feature>
<feature type="compositionally biased region" description="Acidic residues" evidence="7">
    <location>
        <begin position="1"/>
        <end position="19"/>
    </location>
</feature>
<feature type="compositionally biased region" description="Low complexity" evidence="7">
    <location>
        <begin position="227"/>
        <end position="244"/>
    </location>
</feature>
<feature type="compositionally biased region" description="Basic and acidic residues" evidence="7">
    <location>
        <begin position="259"/>
        <end position="276"/>
    </location>
</feature>
<feature type="compositionally biased region" description="Basic and acidic residues" evidence="7">
    <location>
        <begin position="308"/>
        <end position="320"/>
    </location>
</feature>
<feature type="compositionally biased region" description="Basic and acidic residues" evidence="7">
    <location>
        <begin position="673"/>
        <end position="687"/>
    </location>
</feature>
<feature type="compositionally biased region" description="Acidic residues" evidence="7">
    <location>
        <begin position="688"/>
        <end position="697"/>
    </location>
</feature>
<feature type="compositionally biased region" description="Basic and acidic residues" evidence="7">
    <location>
        <begin position="821"/>
        <end position="846"/>
    </location>
</feature>
<feature type="compositionally biased region" description="Basic and acidic residues" evidence="7">
    <location>
        <begin position="853"/>
        <end position="864"/>
    </location>
</feature>
<feature type="compositionally biased region" description="Basic and acidic residues" evidence="7">
    <location>
        <begin position="870"/>
        <end position="903"/>
    </location>
</feature>
<feature type="compositionally biased region" description="Basic and acidic residues" evidence="7">
    <location>
        <begin position="916"/>
        <end position="953"/>
    </location>
</feature>
<feature type="compositionally biased region" description="Polar residues" evidence="7">
    <location>
        <begin position="957"/>
        <end position="969"/>
    </location>
</feature>
<feature type="compositionally biased region" description="Basic and acidic residues" evidence="7">
    <location>
        <begin position="1079"/>
        <end position="1090"/>
    </location>
</feature>
<feature type="compositionally biased region" description="Basic residues" evidence="7">
    <location>
        <begin position="1105"/>
        <end position="1115"/>
    </location>
</feature>
<feature type="compositionally biased region" description="Polar residues" evidence="7">
    <location>
        <begin position="1131"/>
        <end position="1156"/>
    </location>
</feature>
<feature type="compositionally biased region" description="Low complexity" evidence="7">
    <location>
        <begin position="1157"/>
        <end position="1169"/>
    </location>
</feature>
<feature type="compositionally biased region" description="Polar residues" evidence="7">
    <location>
        <begin position="1171"/>
        <end position="1189"/>
    </location>
</feature>
<feature type="compositionally biased region" description="Low complexity" evidence="7">
    <location>
        <begin position="1280"/>
        <end position="1292"/>
    </location>
</feature>
<feature type="compositionally biased region" description="Polar residues" evidence="7">
    <location>
        <begin position="1294"/>
        <end position="1320"/>
    </location>
</feature>
<feature type="compositionally biased region" description="Low complexity" evidence="7">
    <location>
        <begin position="1321"/>
        <end position="1333"/>
    </location>
</feature>
<feature type="compositionally biased region" description="Polar residues" evidence="7">
    <location>
        <begin position="1335"/>
        <end position="1353"/>
    </location>
</feature>
<feature type="compositionally biased region" description="Low complexity" evidence="7">
    <location>
        <begin position="1390"/>
        <end position="1402"/>
    </location>
</feature>
<feature type="compositionally biased region" description="Polar residues" evidence="7">
    <location>
        <begin position="1418"/>
        <end position="1434"/>
    </location>
</feature>
<feature type="compositionally biased region" description="Polar residues" evidence="7">
    <location>
        <begin position="1456"/>
        <end position="1487"/>
    </location>
</feature>
<feature type="compositionally biased region" description="Polar residues" evidence="7">
    <location>
        <begin position="1499"/>
        <end position="1527"/>
    </location>
</feature>
<feature type="compositionally biased region" description="Polar residues" evidence="7">
    <location>
        <begin position="1540"/>
        <end position="1559"/>
    </location>
</feature>
<feature type="compositionally biased region" description="Low complexity" evidence="7">
    <location>
        <begin position="1567"/>
        <end position="1578"/>
    </location>
</feature>
<feature type="compositionally biased region" description="Polar residues" evidence="7">
    <location>
        <begin position="1581"/>
        <end position="1598"/>
    </location>
</feature>
<feature type="compositionally biased region" description="Polar residues" evidence="7">
    <location>
        <begin position="1626"/>
        <end position="1639"/>
    </location>
</feature>
<feature type="compositionally biased region" description="Polar residues" evidence="7">
    <location>
        <begin position="1664"/>
        <end position="1680"/>
    </location>
</feature>
<feature type="compositionally biased region" description="Polar residues" evidence="7">
    <location>
        <begin position="1705"/>
        <end position="1721"/>
    </location>
</feature>
<feature type="compositionally biased region" description="Polar residues" evidence="7">
    <location>
        <begin position="1761"/>
        <end position="1770"/>
    </location>
</feature>
<feature type="compositionally biased region" description="Polar residues" evidence="7">
    <location>
        <begin position="1907"/>
        <end position="1920"/>
    </location>
</feature>
<feature type="compositionally biased region" description="Basic and acidic residues" evidence="7">
    <location>
        <begin position="1931"/>
        <end position="1941"/>
    </location>
</feature>
<feature type="modified residue" description="Phosphothreonine" evidence="2">
    <location>
        <position position="4"/>
    </location>
</feature>
<feature type="modified residue" description="Phosphoserine" evidence="2">
    <location>
        <position position="108"/>
    </location>
</feature>
<feature type="modified residue" description="Phosphothreonine" evidence="2">
    <location>
        <position position="146"/>
    </location>
</feature>
<feature type="modified residue" description="Phosphoserine" evidence="2">
    <location>
        <position position="168"/>
    </location>
</feature>
<feature type="modified residue" description="Phosphoserine" evidence="4">
    <location>
        <position position="176"/>
    </location>
</feature>
<feature type="modified residue" description="Phosphoserine" evidence="2">
    <location>
        <position position="198"/>
    </location>
</feature>
<feature type="modified residue" description="Phosphoserine" evidence="2">
    <location>
        <position position="220"/>
    </location>
</feature>
<feature type="modified residue" description="Phosphothreonine" evidence="2">
    <location>
        <position position="222"/>
    </location>
</feature>
<feature type="modified residue" description="Phosphoserine" evidence="2">
    <location>
        <position position="301"/>
    </location>
</feature>
<feature type="modified residue" description="Phosphothreonine" evidence="2">
    <location>
        <position position="303"/>
    </location>
</feature>
<feature type="modified residue" description="Phosphoserine" evidence="2">
    <location>
        <position position="331"/>
    </location>
</feature>
<feature type="modified residue" description="Phosphothreonine" evidence="2">
    <location>
        <position position="333"/>
    </location>
</feature>
<feature type="modified residue" description="Phosphoserine" evidence="2">
    <location>
        <position position="374"/>
    </location>
</feature>
<feature type="modified residue" description="Phosphoserine" evidence="2">
    <location>
        <position position="378"/>
    </location>
</feature>
<feature type="modified residue" description="Phosphothreonine" evidence="2">
    <location>
        <position position="380"/>
    </location>
</feature>
<feature type="modified residue" description="Phosphoserine" evidence="2">
    <location>
        <position position="396"/>
    </location>
</feature>
<feature type="modified residue" description="Phosphoserine" evidence="2">
    <location>
        <position position="399"/>
    </location>
</feature>
<feature type="modified residue" description="Phosphoserine" evidence="2">
    <location>
        <position position="404"/>
    </location>
</feature>
<feature type="modified residue" description="Phosphothreonine" evidence="2">
    <location>
        <position position="406"/>
    </location>
</feature>
<feature type="modified residue" description="Phosphoserine" evidence="2">
    <location>
        <position position="413"/>
    </location>
</feature>
<feature type="modified residue" description="Phosphothreonine" evidence="2">
    <location>
        <position position="451"/>
    </location>
</feature>
<feature type="modified residue" description="Phosphoserine" evidence="2">
    <location>
        <position position="455"/>
    </location>
</feature>
<feature type="modified residue" description="Phosphothreonine" evidence="2">
    <location>
        <position position="457"/>
    </location>
</feature>
<feature type="modified residue" description="Phosphoserine" evidence="2">
    <location>
        <position position="487"/>
    </location>
</feature>
<feature type="modified residue" description="Phosphoserine" evidence="2">
    <location>
        <position position="497"/>
    </location>
</feature>
<feature type="modified residue" description="Phosphoserine" evidence="2">
    <location>
        <position position="500"/>
    </location>
</feature>
<feature type="modified residue" description="Phosphoserine" evidence="3">
    <location>
        <position position="506"/>
    </location>
</feature>
<feature type="modified residue" description="Phosphoserine" evidence="3">
    <location>
        <position position="507"/>
    </location>
</feature>
<feature type="modified residue" description="Phosphoserine" evidence="2">
    <location>
        <position position="515"/>
    </location>
</feature>
<feature type="modified residue" description="Phosphothreonine" evidence="2">
    <location>
        <position position="525"/>
    </location>
</feature>
<feature type="modified residue" description="Phosphoserine" evidence="4">
    <location>
        <position position="592"/>
    </location>
</feature>
<feature type="modified residue" description="Phosphoserine" evidence="3">
    <location>
        <position position="631"/>
    </location>
</feature>
<feature type="modified residue" description="Phosphoserine" evidence="2">
    <location>
        <position position="782"/>
    </location>
</feature>
<feature type="modified residue" description="Phosphoserine" evidence="2">
    <location>
        <position position="795"/>
    </location>
</feature>
<feature type="modified residue" description="N6-acetyllysine" evidence="2">
    <location>
        <position position="814"/>
    </location>
</feature>
<feature type="modified residue" description="Phosphoserine" evidence="2">
    <location>
        <position position="957"/>
    </location>
</feature>
<feature type="modified residue" description="Phosphoserine" evidence="2">
    <location>
        <position position="1000"/>
    </location>
</feature>
<feature type="modified residue" description="Phosphoserine" evidence="2">
    <location>
        <position position="1035"/>
    </location>
</feature>
<feature type="modified residue" description="Phosphoserine" evidence="2">
    <location>
        <position position="1070"/>
    </location>
</feature>
<feature type="modified residue" description="Phosphoserine" evidence="2">
    <location>
        <position position="1088"/>
    </location>
</feature>
<feature type="modified residue" description="Phosphothreonine" evidence="2">
    <location>
        <position position="1159"/>
    </location>
</feature>
<feature type="modified residue" description="Phosphothreonine" evidence="2">
    <location>
        <position position="1200"/>
    </location>
</feature>
<feature type="modified residue" description="Phosphoserine" evidence="3">
    <location>
        <position position="1237"/>
    </location>
</feature>
<feature type="modified residue" description="Phosphothreonine" evidence="2">
    <location>
        <position position="1241"/>
    </location>
</feature>
<feature type="modified residue" description="Phosphothreonine" evidence="2">
    <location>
        <position position="1282"/>
    </location>
</feature>
<feature type="modified residue" description="Phosphothreonine" evidence="2">
    <location>
        <position position="1304"/>
    </location>
</feature>
<feature type="modified residue" description="Phosphoserine" evidence="2">
    <location>
        <position position="1483"/>
    </location>
</feature>
<feature type="modified residue" description="Phosphoserine" evidence="2">
    <location>
        <position position="1484"/>
    </location>
</feature>
<feature type="modified residue" description="N6-acetyllysine" evidence="2">
    <location>
        <position position="1486"/>
    </location>
</feature>
<feature type="modified residue" description="Phosphothreonine" evidence="2">
    <location>
        <position position="1509"/>
    </location>
</feature>
<feature type="modified residue" description="Phosphothreonine" evidence="2">
    <location>
        <position position="1550"/>
    </location>
</feature>
<feature type="modified residue" description="Phosphothreonine" evidence="3">
    <location>
        <position position="1617"/>
    </location>
</feature>
<feature type="modified residue" description="Phosphothreonine" evidence="2">
    <location>
        <position position="1632"/>
    </location>
</feature>
<feature type="modified residue" description="Phosphoserine" evidence="2">
    <location>
        <position position="1648"/>
    </location>
</feature>
<feature type="modified residue" description="Phosphothreonine" evidence="2">
    <location>
        <position position="1651"/>
    </location>
</feature>
<feature type="modified residue" description="Phosphothreonine" evidence="2">
    <location>
        <position position="1673"/>
    </location>
</feature>
<feature type="modified residue" description="Phosphoserine" evidence="2">
    <location>
        <position position="1688"/>
    </location>
</feature>
<feature type="modified residue" description="Phosphothreonine" evidence="2">
    <location>
        <position position="1692"/>
    </location>
</feature>
<feature type="modified residue" description="Phosphothreonine" evidence="2">
    <location>
        <position position="1714"/>
    </location>
</feature>
<feature type="modified residue" description="Phosphothreonine" evidence="2">
    <location>
        <position position="1748"/>
    </location>
</feature>
<feature type="modified residue" description="Phosphothreonine" evidence="2">
    <location>
        <position position="1755"/>
    </location>
</feature>
<feature type="modified residue" description="Phosphoserine" evidence="2">
    <location>
        <position position="1765"/>
    </location>
</feature>
<feature type="modified residue" description="Phosphothreonine" evidence="2">
    <location>
        <position position="1781"/>
    </location>
</feature>
<feature type="modified residue" description="Phosphoserine" evidence="2">
    <location>
        <position position="1786"/>
    </location>
</feature>
<feature type="modified residue" description="Phosphoserine" evidence="2">
    <location>
        <position position="1795"/>
    </location>
</feature>
<feature type="modified residue" description="Phosphoserine" evidence="2">
    <location>
        <position position="1859"/>
    </location>
</feature>
<feature type="modified residue" description="Phosphothreonine" evidence="2">
    <location>
        <position position="1884"/>
    </location>
</feature>
<feature type="modified residue" description="Phosphoserine" evidence="2">
    <location>
        <position position="1904"/>
    </location>
</feature>
<feature type="modified residue" description="Phosphothreonine" evidence="2">
    <location>
        <position position="1942"/>
    </location>
</feature>
<feature type="modified residue" description="Omega-N-methylarginine" evidence="2">
    <location>
        <position position="2027"/>
    </location>
</feature>
<feature type="cross-link" description="Glycyl lysine isopeptide (Lys-Gly) (interchain with G-Cter in SUMO1); alternate" evidence="2">
    <location>
        <position position="618"/>
    </location>
</feature>
<feature type="cross-link" description="Glycyl lysine isopeptide (Lys-Gly) (interchain with G-Cter in SUMO2); alternate" evidence="2">
    <location>
        <position position="618"/>
    </location>
</feature>
<feature type="cross-link" description="Glycyl lysine isopeptide (Lys-Gly) (interchain with G-Cter in SUMO2)" evidence="2">
    <location>
        <position position="1824"/>
    </location>
</feature>
<feature type="cross-link" description="Glycyl lysine isopeptide (Lys-Gly) (interchain with G-Cter in SUMO2)" evidence="2">
    <location>
        <position position="1874"/>
    </location>
</feature>
<feature type="cross-link" description="Glycyl lysine isopeptide (Lys-Gly) (interchain with G-Cter in SUMO1); alternate" evidence="2">
    <location>
        <position position="1924"/>
    </location>
</feature>
<feature type="cross-link" description="Glycyl lysine isopeptide (Lys-Gly) (interchain with G-Cter in SUMO2); alternate" evidence="2">
    <location>
        <position position="1924"/>
    </location>
</feature>
<comment type="function">
    <text evidence="2">Histone reader protein required for checkpoint-mediated cell cycle arrest in response to DNA damage within both the S phase and G2/M phases of the cell cycle. Specifically recognizes and binds histone H2AX phosphorylated at 'Ser-139', a marker of DNA damage, serving as a scaffold for the recruitment of DNA repair and signal transduction proteins to discrete foci of DNA damage sites. Also required for downstream events subsequent to the recruitment of these proteins. These include phosphorylation and activation of the ATM, CHEK1 and CHEK2 kinases, and stabilization of TP53/p53 and apoptosis. ATM and CHEK2 may also be activated independently by a parallel pathway mediated by TP53BP1. Required for chromosomal stability during mitosis by promoting recruitment of TOPBP1 to DNA double strand breaks (DSBs): TOPBP1 forms filamentous assemblies that bridge MDC1 and tether broken chromosomes during mitosis. Required for the repair of DSBs via homologous recombination by promoting recruitment of NBN component of the MRN complex to DSBs.</text>
</comment>
<comment type="subunit">
    <text evidence="2">Homodimer. Interacts with H2AX, which requires phosphorylation of H2AX on 'Ser-139'. Interacts with the MRN complex, composed of MRE11, RAD50, and NBN. Interacts with CHEK2, which requires ATM-mediated phosphorylation of 'Thr-68' within the FHA domain of CHEK2. Interacts constitutively with the BRCA1-BARD1 complex, SMC1A and TP53BP1. Interacts with ATM and FANCD2, and these interactions are reduced upon DNA damage. Also interacts with the PRKDC complex, composed of XRCC6/KU70, XRCC5/KU80 and PRKDC/XRCC7. This interaction may be required for PRKDC autophosphorylation, which is essential for DNA double strand break (DSB) repair. When phosphorylated by ATM, interacts with RNF8 (via FHA domain). Interacts with CEP164. When phosphorylated, interacts with APTX (via FHA-like domain). Interacts (when phosphorylated) with TOPBP1; promoting TOPBP1 localization to DNA damage sites during mitosis. Interacts (when phosphorylated) with NBN; promoting NBN and MRN complex localization to DNA damage sites (By similarity).</text>
</comment>
<comment type="subcellular location">
    <subcellularLocation>
        <location evidence="2">Nucleus</location>
    </subcellularLocation>
    <subcellularLocation>
        <location evidence="2">Chromosome</location>
    </subcellularLocation>
    <text evidence="2">Associated with chromatin. Relocalizes to discrete nuclear foci following DNA damage, this requires 'Ser-139' phosphorylation of H2AX. Colocalizes with APTX at sites of DNA double-strand breaks.</text>
</comment>
<comment type="domain">
    <text evidence="2">Tandemly repeated BRCT domains are characteristic of proteins involved in DNA damage signaling. In MDC1, these repeats are required for localization to chromatin which flanks sites of DNA damage marked by 'Ser-139' phosphorylation of H2AX.</text>
</comment>
<comment type="PTM">
    <text evidence="2">Phosphorylated upon exposure to ionizing radiation (IR), ultraviolet radiation (UV), and hydroxyurea (HU). Phosphorylation in response to IR requires ATM, NBN, and possibly CHEK2. Also phosphorylated during the G2/M phase of the cell cycle and during activation of the mitotic spindle checkpoint. Phosphorylation at Thr-4 by ATM stabilizes and enhances homodimerization via the FHA domain. Phosphorylated at Ser-168 and Ser-198 by CK2 in response to DNA damage during mitosis, promoting interaction with TOPBP1. Phosphorylated by CK2 in response to DNA damage, promoting interaction with NBN and recruitment of the MRN complex to DNA damage sites.</text>
</comment>
<comment type="PTM">
    <text evidence="2">Sumoylation at Lys-1924 by PIAS4 following DNA damage promotes ubiquitin-mediated degradation.</text>
</comment>
<comment type="PTM">
    <text evidence="2">Ubiquitinated by RNF4, leading to proteasomal degradation; undergoes 'Lys-48'-linked polyubiquitination.</text>
</comment>
<gene>
    <name type="primary">MDC1</name>
</gene>
<reference key="1">
    <citation type="journal article" date="2004" name="Mol. Biol. Evol.">
        <title>Rhesus macaque class I duplicon structures, organization, and evolution within the alpha block of the major histocompatibility complex.</title>
        <authorList>
            <person name="Kulski J.K."/>
            <person name="Anzai T."/>
            <person name="Shiina T."/>
            <person name="Inoko H."/>
        </authorList>
    </citation>
    <scope>NUCLEOTIDE SEQUENCE [LARGE SCALE GENOMIC DNA]</scope>
</reference>
<keyword id="KW-0007">Acetylation</keyword>
<keyword id="KW-0131">Cell cycle</keyword>
<keyword id="KW-0158">Chromosome</keyword>
<keyword id="KW-0227">DNA damage</keyword>
<keyword id="KW-0234">DNA repair</keyword>
<keyword id="KW-1017">Isopeptide bond</keyword>
<keyword id="KW-0488">Methylation</keyword>
<keyword id="KW-0539">Nucleus</keyword>
<keyword id="KW-0597">Phosphoprotein</keyword>
<keyword id="KW-1185">Reference proteome</keyword>
<keyword id="KW-0677">Repeat</keyword>
<keyword id="KW-0832">Ubl conjugation</keyword>
<name>MDC1_MACMU</name>